<dbReference type="EMBL" id="FM177948">
    <property type="protein sequence ID" value="CAQ72892.1"/>
    <property type="molecule type" value="mRNA"/>
</dbReference>
<dbReference type="SMR" id="B5U6Y6"/>
<dbReference type="GO" id="GO:0005576">
    <property type="term" value="C:extracellular region"/>
    <property type="evidence" value="ECO:0007669"/>
    <property type="project" value="UniProtKB-SubCell"/>
</dbReference>
<dbReference type="GO" id="GO:0090729">
    <property type="term" value="F:toxin activity"/>
    <property type="evidence" value="ECO:0007669"/>
    <property type="project" value="UniProtKB-KW"/>
</dbReference>
<dbReference type="FunFam" id="3.10.100.10:FF:000087">
    <property type="entry name" value="Snaclec rhodocetin subunit delta"/>
    <property type="match status" value="1"/>
</dbReference>
<dbReference type="Gene3D" id="3.10.100.10">
    <property type="entry name" value="Mannose-Binding Protein A, subunit A"/>
    <property type="match status" value="1"/>
</dbReference>
<dbReference type="InterPro" id="IPR001304">
    <property type="entry name" value="C-type_lectin-like"/>
</dbReference>
<dbReference type="InterPro" id="IPR016186">
    <property type="entry name" value="C-type_lectin-like/link_sf"/>
</dbReference>
<dbReference type="InterPro" id="IPR050111">
    <property type="entry name" value="C-type_lectin/snaclec_domain"/>
</dbReference>
<dbReference type="InterPro" id="IPR018378">
    <property type="entry name" value="C-type_lectin_CS"/>
</dbReference>
<dbReference type="InterPro" id="IPR016187">
    <property type="entry name" value="CTDL_fold"/>
</dbReference>
<dbReference type="PANTHER" id="PTHR22803">
    <property type="entry name" value="MANNOSE, PHOSPHOLIPASE, LECTIN RECEPTOR RELATED"/>
    <property type="match status" value="1"/>
</dbReference>
<dbReference type="Pfam" id="PF00059">
    <property type="entry name" value="Lectin_C"/>
    <property type="match status" value="1"/>
</dbReference>
<dbReference type="SMART" id="SM00034">
    <property type="entry name" value="CLECT"/>
    <property type="match status" value="1"/>
</dbReference>
<dbReference type="SUPFAM" id="SSF56436">
    <property type="entry name" value="C-type lectin-like"/>
    <property type="match status" value="1"/>
</dbReference>
<dbReference type="PROSITE" id="PS00615">
    <property type="entry name" value="C_TYPE_LECTIN_1"/>
    <property type="match status" value="1"/>
</dbReference>
<dbReference type="PROSITE" id="PS50041">
    <property type="entry name" value="C_TYPE_LECTIN_2"/>
    <property type="match status" value="1"/>
</dbReference>
<proteinExistence type="evidence at transcript level"/>
<reference key="1">
    <citation type="journal article" date="2009" name="J. Proteomics">
        <title>Combined snake venomics and venom gland transcriptomic analysis of the ocellated carpet viper, Echis ocellatus.</title>
        <authorList>
            <person name="Wagstaff S.C."/>
            <person name="Sanz L."/>
            <person name="Juarez P."/>
            <person name="Harrison R.A."/>
            <person name="Calvete J.J."/>
        </authorList>
    </citation>
    <scope>NUCLEOTIDE SEQUENCE [MRNA]</scope>
    <source>
        <tissue>Venom gland</tissue>
    </source>
</reference>
<organism>
    <name type="scientific">Echis ocellatus</name>
    <name type="common">Ocellated saw-scaled viper</name>
    <dbReference type="NCBI Taxonomy" id="99586"/>
    <lineage>
        <taxon>Eukaryota</taxon>
        <taxon>Metazoa</taxon>
        <taxon>Chordata</taxon>
        <taxon>Craniata</taxon>
        <taxon>Vertebrata</taxon>
        <taxon>Euteleostomi</taxon>
        <taxon>Lepidosauria</taxon>
        <taxon>Squamata</taxon>
        <taxon>Bifurcata</taxon>
        <taxon>Unidentata</taxon>
        <taxon>Episquamata</taxon>
        <taxon>Toxicofera</taxon>
        <taxon>Serpentes</taxon>
        <taxon>Colubroidea</taxon>
        <taxon>Viperidae</taxon>
        <taxon>Viperinae</taxon>
        <taxon>Echis</taxon>
    </lineage>
</organism>
<feature type="signal peptide" evidence="2">
    <location>
        <begin position="1"/>
        <end position="23"/>
    </location>
</feature>
<feature type="chain" id="PRO_0000432583" description="Snaclec CTL-Eoc124">
    <location>
        <begin position="24"/>
        <end position="146"/>
    </location>
</feature>
<feature type="domain" description="C-type lectin" evidence="3">
    <location>
        <begin position="32"/>
        <end position="143"/>
    </location>
</feature>
<feature type="disulfide bond" evidence="3">
    <location>
        <begin position="25"/>
        <end position="36"/>
    </location>
</feature>
<feature type="disulfide bond" evidence="3">
    <location>
        <begin position="53"/>
        <end position="142"/>
    </location>
</feature>
<feature type="disulfide bond" description="Interchain" evidence="3">
    <location>
        <position position="98"/>
    </location>
</feature>
<feature type="disulfide bond" evidence="3">
    <location>
        <begin position="119"/>
        <end position="134"/>
    </location>
</feature>
<evidence type="ECO:0000250" key="1"/>
<evidence type="ECO:0000255" key="2"/>
<evidence type="ECO:0000255" key="3">
    <source>
        <dbReference type="PROSITE-ProRule" id="PRU00040"/>
    </source>
</evidence>
<evidence type="ECO:0000305" key="4"/>
<comment type="function">
    <text evidence="1">Interferes with one step of hemostasis (modulation of platelet aggregation, or coagulation cascade, for example).</text>
</comment>
<comment type="subunit">
    <text evidence="1">Heterodimer; disulfide-linked.</text>
</comment>
<comment type="subcellular location">
    <subcellularLocation>
        <location evidence="1">Secreted</location>
    </subcellularLocation>
</comment>
<comment type="tissue specificity">
    <text evidence="4">Expressed by the venom gland.</text>
</comment>
<comment type="similarity">
    <text evidence="4">Belongs to the snaclec family.</text>
</comment>
<accession>B5U6Y6</accession>
<sequence>MGRFISVSFGLLVVFLSLSGTGADCLPDWSPYQGHCYRVFNQKMTWADAEKFCTEQANGGHLASFHSSKEVDFMVSLAFPMLKVDFVWIGMSDFWRDCEWKWSDGAKLDYKAWNNELNCFVSKTTDNQWLRWDCSRTNNVACKYPL</sequence>
<name>SL124_ECHOC</name>
<keyword id="KW-1015">Disulfide bond</keyword>
<keyword id="KW-1199">Hemostasis impairing toxin</keyword>
<keyword id="KW-0964">Secreted</keyword>
<keyword id="KW-0732">Signal</keyword>
<keyword id="KW-0800">Toxin</keyword>
<protein>
    <recommendedName>
        <fullName>Snaclec CTL-Eoc124</fullName>
    </recommendedName>
    <alternativeName>
        <fullName>C-type lectin-like CTL-Eoc124</fullName>
    </alternativeName>
</protein>